<comment type="function">
    <text evidence="6 10">Part of the third module of ergosterol biosynthesis pathway that includes the late steps of the pathway (PubMed:23892078). ERG29 regulates the activity of the iron-containing C4-methylsterol oxidase ERG25 (PubMed:23892078). The third module or late pathway involves the ergosterol synthesis itself through consecutive reactions that mainly occur in the endoplasmic reticulum (ER) membrane. Firstly, the squalene synthase ERG9 catalyzes the condensation of 2 farnesyl pyrophosphate moieties to form squalene, which is the precursor of all steroids. Squalene synthase is crucial for balancing the incorporation of farnesyl diphosphate (FPP) into sterol and nonsterol isoprene synthesis. Secondly, the squalene epoxidase ERG1 catalyzes the stereospecific oxidation of squalene to (S)-2,3-epoxysqualene, which is considered to be a rate-limiting enzyme in steroid biosynthesis. Then, the lanosterol synthase ERG7 catalyzes the cyclization of (S)-2,3 oxidosqualene to lanosterol, a reaction that forms the sterol core. In the next steps, lanosterol is transformed to zymosterol through a complex process involving various demethylation, reduction and desaturation reactions. The lanosterol 14-alpha-demethylase ERG11 (also known as CYP51) catalyzes C14-demethylation of lanosterol to produce 4,4'-dimethyl cholesta-8,14,24-triene-3-beta-ol, which is critical for ergosterol biosynthesis. The C-14 reductase ERG24 reduces the C14=C15 double bond of 4,4-dimethyl-cholesta-8,14,24-trienol to produce 4,4-dimethyl-cholesta-8,24-dienol. 4,4-dimethyl-cholesta-8,24-dienol is substrate of the C-4 demethylation complex ERG25-ERG26-ERG27 in which ERG25 catalyzes the three-step monooxygenation required for the demethylation of 4,4-dimethyl and 4alpha-methylsterols, ERG26 catalyzes the oxidative decarboxylation that results in a reduction of the 3-beta-hydroxy group at the C-3 carbon to an oxo group, and ERG27 is responsible for the reduction of the keto group on the C-3. ERG28 has a role as a scaffold to help anchor ERG25, ERG26 and ERG27 to the endoplasmic reticulum and ERG29 regulates the activity of the iron-containing C4-methylsterol oxidase ERG25. Then, the sterol 24-C-methyltransferase ERG6 catalyzes the methyl transfer from S-adenosyl-methionine to the C-24 of zymosterol to form fecosterol. The C-8 sterol isomerase ERG2 catalyzes the reaction which results in unsaturation at C-7 in the B ring of sterols and thus converts fecosterol to episterol. The sterol-C5-desaturase ERG3 then catalyzes the introduction of a C-5 double bond in the B ring to produce 5-dehydroepisterol. The C-22 sterol desaturase ERG5 further converts 5-dehydroepisterol into ergosta-5,7,22,24(28)-tetraen-3beta-ol by forming the C-22(23) double bond in the sterol side chain. Finally, ergosta-5,7,22,24(28)-tetraen-3beta-ol is substrate of the C-24(28) sterol reductase ERG4 to produce ergosterol (PubMed:32679672).</text>
</comment>
<comment type="function">
    <text evidence="4 5 6 7 8">Plays a role in maintaining mitochondrial and plasma membrane integrity and consequently impacting the iron homeostasis, respiratory metabolism and antioxidant response (PubMed:16135527, PubMed:16630279, PubMed:23892078, PubMed:29773647, PubMed:9180083).</text>
</comment>
<comment type="interaction">
    <interactant intactId="EBI-27272">
        <id>P40207</id>
    </interactant>
    <interactant intactId="EBI-13337">
        <id>P46956</id>
        <label>PHO86</label>
    </interactant>
    <organismsDiffer>false</organismsDiffer>
    <experiments>4</experiments>
</comment>
<comment type="subcellular location">
    <subcellularLocation>
        <location evidence="2 7">Endoplasmic reticulum membrane</location>
        <topology evidence="11">Single-pass membrane protein</topology>
    </subcellularLocation>
</comment>
<comment type="disruption phenotype">
    <text evidence="5 6 7">Causes lethality under aerobic growth conditions (PubMed:16630279, PubMed:29773647). Affects the methyl sterol oxidase reaction performed by the C4-methylsterol monooxygenase ERG25 and leads to an increase in intermediate sterols and a corresponding decrease in zymosterol and ergosterol production (PubMed:29773647). Impairs Fe-S cluster synthesis via increased degradation of YFH1 (PubMed:29773647). Leads to increased mitochondrial oxidants (PubMed:29773647). Leads to an increased accumulation of iron from the culture media (PubMed:23892078).</text>
</comment>
<comment type="miscellaneous">
    <text evidence="3">Present with 2950 molecules/cell in log phase SD medium.</text>
</comment>
<sequence>MSLKDRYLNLELKLINKLQELPYVHQFIHDRISGRITLFLIVVGTLAFFNELYITIEMSLLQKNTSEELERGRIDESLKLHRMLVSDEYHGKEYKDEKSGIVIEEFEDRDKFFAKPVFVSELDVECNVIVDGKELLSTPLKFHVEFSPEDYENEKRPEFGTTLRVLRLRLYHYFKDCEIYRDIIKNEGGEGARKFTISNGVKIYNHKDELLPLNIDDVQLCFLKIDTGNTIKCEFIL</sequence>
<organism>
    <name type="scientific">Saccharomyces cerevisiae (strain ATCC 204508 / S288c)</name>
    <name type="common">Baker's yeast</name>
    <dbReference type="NCBI Taxonomy" id="559292"/>
    <lineage>
        <taxon>Eukaryota</taxon>
        <taxon>Fungi</taxon>
        <taxon>Dikarya</taxon>
        <taxon>Ascomycota</taxon>
        <taxon>Saccharomycotina</taxon>
        <taxon>Saccharomycetes</taxon>
        <taxon>Saccharomycetales</taxon>
        <taxon>Saccharomycetaceae</taxon>
        <taxon>Saccharomyces</taxon>
    </lineage>
</organism>
<protein>
    <recommendedName>
        <fullName evidence="9">Ergosterol biosynthesis protein 29</fullName>
    </recommendedName>
</protein>
<keyword id="KW-0256">Endoplasmic reticulum</keyword>
<keyword id="KW-0444">Lipid biosynthesis</keyword>
<keyword id="KW-0443">Lipid metabolism</keyword>
<keyword id="KW-0472">Membrane</keyword>
<keyword id="KW-1185">Reference proteome</keyword>
<keyword id="KW-0752">Steroid biosynthesis</keyword>
<keyword id="KW-0753">Steroid metabolism</keyword>
<keyword id="KW-0756">Sterol biosynthesis</keyword>
<keyword id="KW-1207">Sterol metabolism</keyword>
<keyword id="KW-0812">Transmembrane</keyword>
<keyword id="KW-1133">Transmembrane helix</keyword>
<feature type="chain" id="PRO_0000203302" description="Ergosterol biosynthesis protein 29">
    <location>
        <begin position="1"/>
        <end position="237"/>
    </location>
</feature>
<feature type="transmembrane region" description="Helical" evidence="1">
    <location>
        <begin position="36"/>
        <end position="56"/>
    </location>
</feature>
<proteinExistence type="evidence at protein level"/>
<gene>
    <name evidence="9" type="primary">ERG29</name>
    <name type="ordered locus">YMR134W</name>
    <name type="ORF">YM9375.03</name>
</gene>
<accession>P40207</accession>
<accession>D6VZV7</accession>
<evidence type="ECO:0000255" key="1"/>
<evidence type="ECO:0000269" key="2">
    <source>
    </source>
</evidence>
<evidence type="ECO:0000269" key="3">
    <source>
    </source>
</evidence>
<evidence type="ECO:0000269" key="4">
    <source>
    </source>
</evidence>
<evidence type="ECO:0000269" key="5">
    <source>
    </source>
</evidence>
<evidence type="ECO:0000269" key="6">
    <source>
    </source>
</evidence>
<evidence type="ECO:0000269" key="7">
    <source>
    </source>
</evidence>
<evidence type="ECO:0000269" key="8">
    <source>
    </source>
</evidence>
<evidence type="ECO:0000303" key="9">
    <source>
    </source>
</evidence>
<evidence type="ECO:0000303" key="10">
    <source>
    </source>
</evidence>
<evidence type="ECO:0000305" key="11"/>
<dbReference type="EMBL" id="Z47071">
    <property type="protein sequence ID" value="CAA87348.1"/>
    <property type="molecule type" value="Genomic_DNA"/>
</dbReference>
<dbReference type="EMBL" id="AY558410">
    <property type="protein sequence ID" value="AAS56736.1"/>
    <property type="molecule type" value="Genomic_DNA"/>
</dbReference>
<dbReference type="EMBL" id="BK006946">
    <property type="protein sequence ID" value="DAA10031.1"/>
    <property type="molecule type" value="Genomic_DNA"/>
</dbReference>
<dbReference type="PIR" id="S50390">
    <property type="entry name" value="S50390"/>
</dbReference>
<dbReference type="RefSeq" id="NP_013853.1">
    <property type="nucleotide sequence ID" value="NM_001182635.1"/>
</dbReference>
<dbReference type="BioGRID" id="35311">
    <property type="interactions" value="20"/>
</dbReference>
<dbReference type="DIP" id="DIP-4433N"/>
<dbReference type="FunCoup" id="P40207">
    <property type="interactions" value="86"/>
</dbReference>
<dbReference type="IntAct" id="P40207">
    <property type="interactions" value="2"/>
</dbReference>
<dbReference type="MINT" id="P40207"/>
<dbReference type="STRING" id="4932.YMR134W"/>
<dbReference type="iPTMnet" id="P40207"/>
<dbReference type="PaxDb" id="4932-YMR134W"/>
<dbReference type="PeptideAtlas" id="P40207"/>
<dbReference type="EnsemblFungi" id="YMR134W_mRNA">
    <property type="protein sequence ID" value="YMR134W"/>
    <property type="gene ID" value="YMR134W"/>
</dbReference>
<dbReference type="GeneID" id="855164"/>
<dbReference type="KEGG" id="sce:YMR134W"/>
<dbReference type="AGR" id="SGD:S000004741"/>
<dbReference type="SGD" id="S000004741">
    <property type="gene designation" value="ERG29"/>
</dbReference>
<dbReference type="VEuPathDB" id="FungiDB:YMR134W"/>
<dbReference type="eggNOG" id="ENOG502QRC6">
    <property type="taxonomic scope" value="Eukaryota"/>
</dbReference>
<dbReference type="HOGENOM" id="CLU_101860_0_0_1"/>
<dbReference type="InParanoid" id="P40207"/>
<dbReference type="OMA" id="FEDRDKF"/>
<dbReference type="OrthoDB" id="4041975at2759"/>
<dbReference type="BioCyc" id="YEAST:G3O-32827-MONOMER"/>
<dbReference type="BioGRID-ORCS" id="855164">
    <property type="hits" value="1 hit in 10 CRISPR screens"/>
</dbReference>
<dbReference type="PRO" id="PR:P40207"/>
<dbReference type="Proteomes" id="UP000002311">
    <property type="component" value="Chromosome XIII"/>
</dbReference>
<dbReference type="RNAct" id="P40207">
    <property type="molecule type" value="protein"/>
</dbReference>
<dbReference type="GO" id="GO:0005737">
    <property type="term" value="C:cytoplasm"/>
    <property type="evidence" value="ECO:0007005"/>
    <property type="project" value="SGD"/>
</dbReference>
<dbReference type="GO" id="GO:0005783">
    <property type="term" value="C:endoplasmic reticulum"/>
    <property type="evidence" value="ECO:0007005"/>
    <property type="project" value="SGD"/>
</dbReference>
<dbReference type="GO" id="GO:0005789">
    <property type="term" value="C:endoplasmic reticulum membrane"/>
    <property type="evidence" value="ECO:0007669"/>
    <property type="project" value="UniProtKB-SubCell"/>
</dbReference>
<dbReference type="GO" id="GO:0005635">
    <property type="term" value="C:nuclear envelope"/>
    <property type="evidence" value="ECO:0007005"/>
    <property type="project" value="SGD"/>
</dbReference>
<dbReference type="GO" id="GO:0006696">
    <property type="term" value="P:ergosterol biosynthetic process"/>
    <property type="evidence" value="ECO:0000315"/>
    <property type="project" value="SGD"/>
</dbReference>
<dbReference type="GO" id="GO:0006879">
    <property type="term" value="P:intracellular iron ion homeostasis"/>
    <property type="evidence" value="ECO:0000315"/>
    <property type="project" value="SGD"/>
</dbReference>
<dbReference type="GO" id="GO:0007005">
    <property type="term" value="P:mitochondrion organization"/>
    <property type="evidence" value="ECO:0000315"/>
    <property type="project" value="SGD"/>
</dbReference>
<name>ERG29_YEAST</name>
<reference key="1">
    <citation type="journal article" date="1997" name="Nature">
        <title>The nucleotide sequence of Saccharomyces cerevisiae chromosome XIII.</title>
        <authorList>
            <person name="Bowman S."/>
            <person name="Churcher C.M."/>
            <person name="Badcock K."/>
            <person name="Brown D."/>
            <person name="Chillingworth T."/>
            <person name="Connor R."/>
            <person name="Dedman K."/>
            <person name="Devlin K."/>
            <person name="Gentles S."/>
            <person name="Hamlin N."/>
            <person name="Hunt S."/>
            <person name="Jagels K."/>
            <person name="Lye G."/>
            <person name="Moule S."/>
            <person name="Odell C."/>
            <person name="Pearson D."/>
            <person name="Rajandream M.A."/>
            <person name="Rice P."/>
            <person name="Skelton J."/>
            <person name="Walsh S.V."/>
            <person name="Whitehead S."/>
            <person name="Barrell B.G."/>
        </authorList>
    </citation>
    <scope>NUCLEOTIDE SEQUENCE [LARGE SCALE GENOMIC DNA]</scope>
    <source>
        <strain>ATCC 204508 / S288c</strain>
    </source>
</reference>
<reference key="2">
    <citation type="journal article" date="2014" name="G3 (Bethesda)">
        <title>The reference genome sequence of Saccharomyces cerevisiae: Then and now.</title>
        <authorList>
            <person name="Engel S.R."/>
            <person name="Dietrich F.S."/>
            <person name="Fisk D.G."/>
            <person name="Binkley G."/>
            <person name="Balakrishnan R."/>
            <person name="Costanzo M.C."/>
            <person name="Dwight S.S."/>
            <person name="Hitz B.C."/>
            <person name="Karra K."/>
            <person name="Nash R.S."/>
            <person name="Weng S."/>
            <person name="Wong E.D."/>
            <person name="Lloyd P."/>
            <person name="Skrzypek M.S."/>
            <person name="Miyasato S.R."/>
            <person name="Simison M."/>
            <person name="Cherry J.M."/>
        </authorList>
    </citation>
    <scope>GENOME REANNOTATION</scope>
    <source>
        <strain>ATCC 204508 / S288c</strain>
    </source>
</reference>
<reference key="3">
    <citation type="journal article" date="2007" name="Genome Res.">
        <title>Approaching a complete repository of sequence-verified protein-encoding clones for Saccharomyces cerevisiae.</title>
        <authorList>
            <person name="Hu Y."/>
            <person name="Rolfs A."/>
            <person name="Bhullar B."/>
            <person name="Murthy T.V.S."/>
            <person name="Zhu C."/>
            <person name="Berger M.F."/>
            <person name="Camargo A.A."/>
            <person name="Kelley F."/>
            <person name="McCarron S."/>
            <person name="Jepson D."/>
            <person name="Richardson A."/>
            <person name="Raphael J."/>
            <person name="Moreira D."/>
            <person name="Taycher E."/>
            <person name="Zuo D."/>
            <person name="Mohr S."/>
            <person name="Kane M.F."/>
            <person name="Williamson J."/>
            <person name="Simpson A.J.G."/>
            <person name="Bulyk M.L."/>
            <person name="Harlow E."/>
            <person name="Marsischky G."/>
            <person name="Kolodner R.D."/>
            <person name="LaBaer J."/>
        </authorList>
    </citation>
    <scope>NUCLEOTIDE SEQUENCE [GENOMIC DNA]</scope>
    <source>
        <strain>ATCC 204508 / S288c</strain>
    </source>
</reference>
<reference key="4">
    <citation type="journal article" date="1997" name="Science">
        <title>Regulation of mitochondrial iron accumulation by Yfh1p, a putative homolog of frataxin.</title>
        <authorList>
            <person name="Babcock M."/>
            <person name="de Silva D."/>
            <person name="Oaks R."/>
            <person name="Davis-Kaplan S."/>
            <person name="Jiralerspong S."/>
            <person name="Montermini L."/>
            <person name="Pandolfo M."/>
            <person name="Kaplan J."/>
        </authorList>
    </citation>
    <scope>FUNCTION</scope>
</reference>
<reference key="5">
    <citation type="journal article" date="2003" name="Nature">
        <title>Global analysis of protein localization in budding yeast.</title>
        <authorList>
            <person name="Huh W.-K."/>
            <person name="Falvo J.V."/>
            <person name="Gerke L.C."/>
            <person name="Carroll A.S."/>
            <person name="Howson R.W."/>
            <person name="Weissman J.S."/>
            <person name="O'Shea E.K."/>
        </authorList>
    </citation>
    <scope>SUBCELLULAR LOCATION [LARGE SCALE ANALYSIS]</scope>
</reference>
<reference key="6">
    <citation type="journal article" date="2003" name="Nature">
        <title>Global analysis of protein expression in yeast.</title>
        <authorList>
            <person name="Ghaemmaghami S."/>
            <person name="Huh W.-K."/>
            <person name="Bower K."/>
            <person name="Howson R.W."/>
            <person name="Belle A."/>
            <person name="Dephoure N."/>
            <person name="O'Shea E.K."/>
            <person name="Weissman J.S."/>
        </authorList>
    </citation>
    <scope>LEVEL OF PROTEIN EXPRESSION [LARGE SCALE ANALYSIS]</scope>
</reference>
<reference key="7">
    <citation type="journal article" date="2005" name="Mol. Biol. Cell">
        <title>Role of essential genes in mitochondrial morphogenesis in Saccharomyces cerevisiae.</title>
        <authorList>
            <person name="Altmann K."/>
            <person name="Westermann B."/>
        </authorList>
    </citation>
    <scope>FUNCTION</scope>
</reference>
<reference key="8">
    <citation type="journal article" date="2006" name="FEMS Yeast Res.">
        <title>Why does Kluyveromyces lactis not grow under anaerobic conditions? Comparison of essential anaerobic genes of Saccharomyces cerevisiae with the Kluyveromyces lactis genome.</title>
        <authorList>
            <person name="Snoek I.S."/>
            <person name="Steensma H.Y."/>
        </authorList>
    </citation>
    <scope>FUNCTION</scope>
    <scope>DISRUPTION PHENOTYPE</scope>
</reference>
<reference key="9">
    <citation type="journal article" date="2013" name="FEBS Lett.">
        <title>The essential gene YMR134W from Saccharomyces cerevisiae is important for appropriate mitochondrial iron utilization and the ergosterol biosynthetic pathway.</title>
        <authorList>
            <person name="Moretti-Almeida G."/>
            <person name="Netto L.E."/>
            <person name="Monteiro G."/>
        </authorList>
    </citation>
    <scope>FUNCTION</scope>
    <scope>DISRUPTION PHENOTYPE</scope>
</reference>
<reference key="10">
    <citation type="journal article" date="2018" name="J. Biol. Chem.">
        <title>Altered sterol metabolism in budding yeast affects mitochondrial iron-sulfur (Fe-S) cluster synthesis.</title>
        <authorList>
            <person name="Ward D.M."/>
            <person name="Chen O.S."/>
            <person name="Li L."/>
            <person name="Kaplan J."/>
            <person name="Bhuiyan S.A."/>
            <person name="Natarajan S.K."/>
            <person name="Bard M."/>
            <person name="Cox J.E."/>
        </authorList>
    </citation>
    <scope>FUNCTION</scope>
    <scope>DISRUPTION PHENOTYPE</scope>
    <scope>SUBCELLULAR LOCATION</scope>
</reference>
<reference key="11">
    <citation type="journal article" date="2020" name="Genes (Basel)">
        <title>Regulation of ergosterol biosynthesis in Saccharomyces cerevisiae.</title>
        <authorList>
            <person name="Jorda T."/>
            <person name="Puig S."/>
        </authorList>
    </citation>
    <scope>REVIEW ON ERGOSTEROL BIOSYNTHESIS</scope>
</reference>